<accession>P07453</accession>
<organism>
    <name type="scientific">Myoxocephalus scorpius</name>
    <name type="common">Shorthorn sculpin</name>
    <name type="synonym">Cottus scorpius</name>
    <dbReference type="NCBI Taxonomy" id="8097"/>
    <lineage>
        <taxon>Eukaryota</taxon>
        <taxon>Metazoa</taxon>
        <taxon>Chordata</taxon>
        <taxon>Craniata</taxon>
        <taxon>Vertebrata</taxon>
        <taxon>Euteleostomi</taxon>
        <taxon>Actinopterygii</taxon>
        <taxon>Neopterygii</taxon>
        <taxon>Teleostei</taxon>
        <taxon>Neoteleostei</taxon>
        <taxon>Acanthomorphata</taxon>
        <taxon>Eupercaria</taxon>
        <taxon>Perciformes</taxon>
        <taxon>Cottioidei</taxon>
        <taxon>Cottales</taxon>
        <taxon>Cottidae</taxon>
        <taxon>Myoxocephalus</taxon>
    </lineage>
</organism>
<name>INS_MYOSC</name>
<gene>
    <name type="primary">ins</name>
</gene>
<evidence type="ECO:0000269" key="1">
    <source>
    </source>
</evidence>
<evidence type="ECO:0000305" key="2"/>
<protein>
    <recommendedName>
        <fullName>Insulin</fullName>
    </recommendedName>
    <component>
        <recommendedName>
            <fullName>Insulin B chain</fullName>
        </recommendedName>
    </component>
    <component>
        <recommendedName>
            <fullName>Insulin A chain</fullName>
        </recommendedName>
    </component>
</protein>
<keyword id="KW-0119">Carbohydrate metabolism</keyword>
<keyword id="KW-0903">Direct protein sequencing</keyword>
<keyword id="KW-1015">Disulfide bond</keyword>
<keyword id="KW-0313">Glucose metabolism</keyword>
<keyword id="KW-0372">Hormone</keyword>
<keyword id="KW-0964">Secreted</keyword>
<comment type="function">
    <text>Insulin decreases blood glucose concentration. It increases cell permeability to monosaccharides, amino acids and fatty acids. It accelerates glycolysis, the pentose phosphate cycle, and glycogen synthesis in liver.</text>
</comment>
<comment type="subunit">
    <text>Heterodimer of a B chain and an A chain linked by two disulfide bonds.</text>
</comment>
<comment type="subcellular location">
    <subcellularLocation>
        <location>Secreted</location>
    </subcellularLocation>
</comment>
<comment type="similarity">
    <text evidence="2">Belongs to the insulin family.</text>
</comment>
<feature type="peptide" id="PRO_0000015850" description="Insulin B chain" evidence="1">
    <location>
        <begin position="1"/>
        <end position="29"/>
    </location>
</feature>
<feature type="peptide" id="PRO_0000015851" description="Insulin A chain" evidence="1">
    <location>
        <begin position="30"/>
        <end position="50"/>
    </location>
</feature>
<feature type="disulfide bond" description="Interchain (between B and A chains)">
    <location>
        <begin position="7"/>
        <end position="36"/>
    </location>
</feature>
<feature type="disulfide bond" description="Interchain (between B and A chains)">
    <location>
        <begin position="19"/>
        <end position="49"/>
    </location>
</feature>
<feature type="disulfide bond">
    <location>
        <begin position="35"/>
        <end position="40"/>
    </location>
</feature>
<feature type="non-consecutive residues" evidence="2">
    <location>
        <begin position="29"/>
        <end position="30"/>
    </location>
</feature>
<reference key="1">
    <citation type="journal article" date="1986" name="Eur. J. Biochem.">
        <title>The isolation, purification and amino-acid sequence of insulin from the teleost fish Cottus scorpius (daddy sculpin).</title>
        <authorList>
            <person name="Cutfield J.F."/>
            <person name="Cutfield S.M."/>
            <person name="Carne A."/>
            <person name="Emdin S.O."/>
            <person name="Falkmer S."/>
        </authorList>
    </citation>
    <scope>PROTEIN SEQUENCE</scope>
</reference>
<sequence length="50" mass="5683">ADPQHLCGSHLVDALYLVCGDRGFFYNPKGIVEQCCHRPCNIRVLENYCN</sequence>
<dbReference type="PIR" id="A25061">
    <property type="entry name" value="INFIS"/>
</dbReference>
<dbReference type="SMR" id="P07453"/>
<dbReference type="GO" id="GO:0005615">
    <property type="term" value="C:extracellular space"/>
    <property type="evidence" value="ECO:0007669"/>
    <property type="project" value="TreeGrafter"/>
</dbReference>
<dbReference type="GO" id="GO:0005179">
    <property type="term" value="F:hormone activity"/>
    <property type="evidence" value="ECO:0007669"/>
    <property type="project" value="UniProtKB-KW"/>
</dbReference>
<dbReference type="GO" id="GO:0006006">
    <property type="term" value="P:glucose metabolic process"/>
    <property type="evidence" value="ECO:0007669"/>
    <property type="project" value="UniProtKB-KW"/>
</dbReference>
<dbReference type="CDD" id="cd04367">
    <property type="entry name" value="IlGF_insulin_like"/>
    <property type="match status" value="1"/>
</dbReference>
<dbReference type="Gene3D" id="1.10.100.10">
    <property type="entry name" value="Insulin-like"/>
    <property type="match status" value="1"/>
</dbReference>
<dbReference type="InterPro" id="IPR004825">
    <property type="entry name" value="Insulin"/>
</dbReference>
<dbReference type="InterPro" id="IPR016179">
    <property type="entry name" value="Insulin-like"/>
</dbReference>
<dbReference type="InterPro" id="IPR036438">
    <property type="entry name" value="Insulin-like_sf"/>
</dbReference>
<dbReference type="InterPro" id="IPR022353">
    <property type="entry name" value="Insulin_CS"/>
</dbReference>
<dbReference type="InterPro" id="IPR022352">
    <property type="entry name" value="Insulin_family"/>
</dbReference>
<dbReference type="PANTHER" id="PTHR11454:SF9">
    <property type="entry name" value="INSULIN"/>
    <property type="match status" value="1"/>
</dbReference>
<dbReference type="PANTHER" id="PTHR11454">
    <property type="entry name" value="INSULIN/INSULIN GROWTH FACTOR"/>
    <property type="match status" value="1"/>
</dbReference>
<dbReference type="Pfam" id="PF00049">
    <property type="entry name" value="Insulin"/>
    <property type="match status" value="2"/>
</dbReference>
<dbReference type="PRINTS" id="PR00277">
    <property type="entry name" value="INSULIN"/>
</dbReference>
<dbReference type="PRINTS" id="PR00276">
    <property type="entry name" value="INSULINFAMLY"/>
</dbReference>
<dbReference type="SMART" id="SM00078">
    <property type="entry name" value="IlGF"/>
    <property type="match status" value="1"/>
</dbReference>
<dbReference type="SUPFAM" id="SSF56994">
    <property type="entry name" value="Insulin-like"/>
    <property type="match status" value="1"/>
</dbReference>
<dbReference type="PROSITE" id="PS00262">
    <property type="entry name" value="INSULIN"/>
    <property type="match status" value="1"/>
</dbReference>
<proteinExistence type="evidence at protein level"/>